<dbReference type="EMBL" id="AY182024">
    <property type="protein sequence ID" value="AAO67545.1"/>
    <property type="molecule type" value="mRNA"/>
</dbReference>
<dbReference type="EMBL" id="AK056644">
    <property type="protein sequence ID" value="BAB71240.1"/>
    <property type="molecule type" value="mRNA"/>
</dbReference>
<dbReference type="EMBL" id="AK290512">
    <property type="protein sequence ID" value="BAF83201.1"/>
    <property type="molecule type" value="mRNA"/>
</dbReference>
<dbReference type="EMBL" id="AY358310">
    <property type="protein sequence ID" value="AAQ88677.1"/>
    <property type="molecule type" value="mRNA"/>
</dbReference>
<dbReference type="EMBL" id="CH471053">
    <property type="protein sequence ID" value="EAW99566.1"/>
    <property type="molecule type" value="Genomic_DNA"/>
</dbReference>
<dbReference type="EMBL" id="CH471053">
    <property type="protein sequence ID" value="EAW99567.1"/>
    <property type="molecule type" value="Genomic_DNA"/>
</dbReference>
<dbReference type="EMBL" id="BC045113">
    <property type="protein sequence ID" value="AAH45113.1"/>
    <property type="molecule type" value="mRNA"/>
</dbReference>
<dbReference type="CCDS" id="CCDS1966.1"/>
<dbReference type="RefSeq" id="NP_849161.2">
    <property type="nucleotide sequence ID" value="NM_178839.5"/>
</dbReference>
<dbReference type="RefSeq" id="XP_016859475.1">
    <property type="nucleotide sequence ID" value="XM_017003986.3"/>
</dbReference>
<dbReference type="RefSeq" id="XP_016859476.1">
    <property type="nucleotide sequence ID" value="XM_017003987.3"/>
</dbReference>
<dbReference type="RefSeq" id="XP_047300102.1">
    <property type="nucleotide sequence ID" value="XM_047444146.1"/>
</dbReference>
<dbReference type="RefSeq" id="XP_054197743.1">
    <property type="nucleotide sequence ID" value="XM_054341768.1"/>
</dbReference>
<dbReference type="RefSeq" id="XP_054197744.1">
    <property type="nucleotide sequence ID" value="XM_054341769.1"/>
</dbReference>
<dbReference type="SMR" id="Q86UE6"/>
<dbReference type="BioGRID" id="131480">
    <property type="interactions" value="95"/>
</dbReference>
<dbReference type="FunCoup" id="Q86UE6">
    <property type="interactions" value="79"/>
</dbReference>
<dbReference type="IntAct" id="Q86UE6">
    <property type="interactions" value="43"/>
</dbReference>
<dbReference type="STRING" id="9606.ENSP00000295057"/>
<dbReference type="TCDB" id="8.A.43.1.11">
    <property type="family name" value="the neat-domain containing methaemoglobin heme sequestration (n-mhs) family"/>
</dbReference>
<dbReference type="GlyCosmos" id="Q86UE6">
    <property type="glycosylation" value="4 sites, No reported glycans"/>
</dbReference>
<dbReference type="GlyGen" id="Q86UE6">
    <property type="glycosylation" value="5 sites, 1 N-linked glycan (1 site)"/>
</dbReference>
<dbReference type="iPTMnet" id="Q86UE6"/>
<dbReference type="PhosphoSitePlus" id="Q86UE6"/>
<dbReference type="BioMuta" id="LRRTM1"/>
<dbReference type="DMDM" id="146330009"/>
<dbReference type="MassIVE" id="Q86UE6"/>
<dbReference type="PaxDb" id="9606-ENSP00000295057"/>
<dbReference type="PeptideAtlas" id="Q86UE6"/>
<dbReference type="ProteomicsDB" id="69810"/>
<dbReference type="Antibodypedia" id="47487">
    <property type="antibodies" value="245 antibodies from 28 providers"/>
</dbReference>
<dbReference type="DNASU" id="347730"/>
<dbReference type="Ensembl" id="ENST00000295057.4">
    <property type="protein sequence ID" value="ENSP00000295057.3"/>
    <property type="gene ID" value="ENSG00000162951.11"/>
</dbReference>
<dbReference type="Ensembl" id="ENST00000409148.1">
    <property type="protein sequence ID" value="ENSP00000386646.1"/>
    <property type="gene ID" value="ENSG00000162951.11"/>
</dbReference>
<dbReference type="Ensembl" id="ENST00000417012.5">
    <property type="protein sequence ID" value="ENSP00000393562.1"/>
    <property type="gene ID" value="ENSG00000162951.11"/>
</dbReference>
<dbReference type="Ensembl" id="ENST00000433224.1">
    <property type="protein sequence ID" value="ENSP00000414523.1"/>
    <property type="gene ID" value="ENSG00000162951.11"/>
</dbReference>
<dbReference type="GeneID" id="347730"/>
<dbReference type="KEGG" id="hsa:347730"/>
<dbReference type="MANE-Select" id="ENST00000295057.4">
    <property type="protein sequence ID" value="ENSP00000295057.3"/>
    <property type="RefSeq nucleotide sequence ID" value="NM_178839.5"/>
    <property type="RefSeq protein sequence ID" value="NP_849161.2"/>
</dbReference>
<dbReference type="UCSC" id="uc002soj.4">
    <property type="organism name" value="human"/>
</dbReference>
<dbReference type="AGR" id="HGNC:19408"/>
<dbReference type="CTD" id="347730"/>
<dbReference type="DisGeNET" id="347730"/>
<dbReference type="GeneCards" id="LRRTM1"/>
<dbReference type="HGNC" id="HGNC:19408">
    <property type="gene designation" value="LRRTM1"/>
</dbReference>
<dbReference type="HPA" id="ENSG00000162951">
    <property type="expression patterns" value="Group enriched (brain, salivary gland)"/>
</dbReference>
<dbReference type="MIM" id="610867">
    <property type="type" value="gene"/>
</dbReference>
<dbReference type="neXtProt" id="NX_Q86UE6"/>
<dbReference type="OpenTargets" id="ENSG00000162951"/>
<dbReference type="PharmGKB" id="PA134887293"/>
<dbReference type="VEuPathDB" id="HostDB:ENSG00000162951"/>
<dbReference type="eggNOG" id="KOG0619">
    <property type="taxonomic scope" value="Eukaryota"/>
</dbReference>
<dbReference type="GeneTree" id="ENSGT00940000161705"/>
<dbReference type="HOGENOM" id="CLU_032965_0_0_1"/>
<dbReference type="InParanoid" id="Q86UE6"/>
<dbReference type="OMA" id="FHLCEDA"/>
<dbReference type="OrthoDB" id="5984255at2759"/>
<dbReference type="PAN-GO" id="Q86UE6">
    <property type="GO annotations" value="2 GO annotations based on evolutionary models"/>
</dbReference>
<dbReference type="PhylomeDB" id="Q86UE6"/>
<dbReference type="TreeFam" id="TF332659"/>
<dbReference type="PathwayCommons" id="Q86UE6"/>
<dbReference type="Reactome" id="R-HSA-6794361">
    <property type="pathway name" value="Neurexins and neuroligins"/>
</dbReference>
<dbReference type="SignaLink" id="Q86UE6"/>
<dbReference type="BioGRID-ORCS" id="347730">
    <property type="hits" value="11 hits in 1140 CRISPR screens"/>
</dbReference>
<dbReference type="GeneWiki" id="LRRTM1"/>
<dbReference type="GenomeRNAi" id="347730"/>
<dbReference type="Pharos" id="Q86UE6">
    <property type="development level" value="Tbio"/>
</dbReference>
<dbReference type="PRO" id="PR:Q86UE6"/>
<dbReference type="Proteomes" id="UP000005640">
    <property type="component" value="Chromosome 2"/>
</dbReference>
<dbReference type="RNAct" id="Q86UE6">
    <property type="molecule type" value="protein"/>
</dbReference>
<dbReference type="Bgee" id="ENSG00000162951">
    <property type="expression patterns" value="Expressed in lateral nuclear group of thalamus and 108 other cell types or tissues"/>
</dbReference>
<dbReference type="ExpressionAtlas" id="Q86UE6">
    <property type="expression patterns" value="baseline and differential"/>
</dbReference>
<dbReference type="GO" id="GO:0030424">
    <property type="term" value="C:axon"/>
    <property type="evidence" value="ECO:0000314"/>
    <property type="project" value="UniProtKB"/>
</dbReference>
<dbReference type="GO" id="GO:0005783">
    <property type="term" value="C:endoplasmic reticulum"/>
    <property type="evidence" value="ECO:0000314"/>
    <property type="project" value="UniProtKB"/>
</dbReference>
<dbReference type="GO" id="GO:0031012">
    <property type="term" value="C:extracellular matrix"/>
    <property type="evidence" value="ECO:0000318"/>
    <property type="project" value="GO_Central"/>
</dbReference>
<dbReference type="GO" id="GO:0005615">
    <property type="term" value="C:extracellular space"/>
    <property type="evidence" value="ECO:0000318"/>
    <property type="project" value="GO_Central"/>
</dbReference>
<dbReference type="GO" id="GO:0098982">
    <property type="term" value="C:GABA-ergic synapse"/>
    <property type="evidence" value="ECO:0000314"/>
    <property type="project" value="SynGO"/>
</dbReference>
<dbReference type="GO" id="GO:0030426">
    <property type="term" value="C:growth cone"/>
    <property type="evidence" value="ECO:0000314"/>
    <property type="project" value="UniProtKB"/>
</dbReference>
<dbReference type="GO" id="GO:0099634">
    <property type="term" value="C:postsynaptic specialization membrane"/>
    <property type="evidence" value="ECO:0000314"/>
    <property type="project" value="SynGO"/>
</dbReference>
<dbReference type="GO" id="GO:0051649">
    <property type="term" value="P:establishment of localization in cell"/>
    <property type="evidence" value="ECO:0007669"/>
    <property type="project" value="Ensembl"/>
</dbReference>
<dbReference type="GO" id="GO:0035640">
    <property type="term" value="P:exploration behavior"/>
    <property type="evidence" value="ECO:0007669"/>
    <property type="project" value="Ensembl"/>
</dbReference>
<dbReference type="GO" id="GO:0007626">
    <property type="term" value="P:locomotory behavior"/>
    <property type="evidence" value="ECO:0007669"/>
    <property type="project" value="Ensembl"/>
</dbReference>
<dbReference type="GO" id="GO:0060291">
    <property type="term" value="P:long-term synaptic potentiation"/>
    <property type="evidence" value="ECO:0007669"/>
    <property type="project" value="Ensembl"/>
</dbReference>
<dbReference type="GO" id="GO:0002091">
    <property type="term" value="P:negative regulation of receptor internalization"/>
    <property type="evidence" value="ECO:0007669"/>
    <property type="project" value="Ensembl"/>
</dbReference>
<dbReference type="GO" id="GO:0051965">
    <property type="term" value="P:positive regulation of synapse assembly"/>
    <property type="evidence" value="ECO:0007669"/>
    <property type="project" value="Ensembl"/>
</dbReference>
<dbReference type="GO" id="GO:0035418">
    <property type="term" value="P:protein localization to synapse"/>
    <property type="evidence" value="ECO:0007669"/>
    <property type="project" value="Ensembl"/>
</dbReference>
<dbReference type="GO" id="GO:0031623">
    <property type="term" value="P:receptor internalization"/>
    <property type="evidence" value="ECO:0007669"/>
    <property type="project" value="Ensembl"/>
</dbReference>
<dbReference type="GO" id="GO:0050808">
    <property type="term" value="P:synapse organization"/>
    <property type="evidence" value="ECO:0007669"/>
    <property type="project" value="Ensembl"/>
</dbReference>
<dbReference type="FunFam" id="3.80.10.10:FF:000005">
    <property type="entry name" value="leucine-rich repeat transmembrane neuronal protein 4"/>
    <property type="match status" value="1"/>
</dbReference>
<dbReference type="Gene3D" id="3.80.10.10">
    <property type="entry name" value="Ribonuclease Inhibitor"/>
    <property type="match status" value="1"/>
</dbReference>
<dbReference type="InterPro" id="IPR001611">
    <property type="entry name" value="Leu-rich_rpt"/>
</dbReference>
<dbReference type="InterPro" id="IPR003591">
    <property type="entry name" value="Leu-rich_rpt_typical-subtyp"/>
</dbReference>
<dbReference type="InterPro" id="IPR032675">
    <property type="entry name" value="LRR_dom_sf"/>
</dbReference>
<dbReference type="PANTHER" id="PTHR45617">
    <property type="entry name" value="LEUCINE RICH REPEAT FAMILY PROTEIN"/>
    <property type="match status" value="1"/>
</dbReference>
<dbReference type="PANTHER" id="PTHR45617:SF94">
    <property type="entry name" value="LEUCINE RICH REPEAT TRANSMEMBRANE NEURONAL 1"/>
    <property type="match status" value="1"/>
</dbReference>
<dbReference type="Pfam" id="PF13855">
    <property type="entry name" value="LRR_8"/>
    <property type="match status" value="3"/>
</dbReference>
<dbReference type="SMART" id="SM00369">
    <property type="entry name" value="LRR_TYP"/>
    <property type="match status" value="9"/>
</dbReference>
<dbReference type="SUPFAM" id="SSF52058">
    <property type="entry name" value="L domain-like"/>
    <property type="match status" value="1"/>
</dbReference>
<dbReference type="PROSITE" id="PS51450">
    <property type="entry name" value="LRR"/>
    <property type="match status" value="9"/>
</dbReference>
<reference key="1">
    <citation type="journal article" date="2003" name="Genomics">
        <title>A novel gene family encoding leucine-rich repeat transmembrane proteins differentially expressed in the nervous system.</title>
        <authorList>
            <person name="Lauren J."/>
            <person name="Airaksinen M.S."/>
            <person name="Saarma M."/>
            <person name="Timmusk T.T."/>
        </authorList>
    </citation>
    <scope>NUCLEOTIDE SEQUENCE [MRNA]</scope>
    <scope>TISSUE SPECIFICITY</scope>
</reference>
<reference key="2">
    <citation type="journal article" date="2004" name="Nat. Genet.">
        <title>Complete sequencing and characterization of 21,243 full-length human cDNAs.</title>
        <authorList>
            <person name="Ota T."/>
            <person name="Suzuki Y."/>
            <person name="Nishikawa T."/>
            <person name="Otsuki T."/>
            <person name="Sugiyama T."/>
            <person name="Irie R."/>
            <person name="Wakamatsu A."/>
            <person name="Hayashi K."/>
            <person name="Sato H."/>
            <person name="Nagai K."/>
            <person name="Kimura K."/>
            <person name="Makita H."/>
            <person name="Sekine M."/>
            <person name="Obayashi M."/>
            <person name="Nishi T."/>
            <person name="Shibahara T."/>
            <person name="Tanaka T."/>
            <person name="Ishii S."/>
            <person name="Yamamoto J."/>
            <person name="Saito K."/>
            <person name="Kawai Y."/>
            <person name="Isono Y."/>
            <person name="Nakamura Y."/>
            <person name="Nagahari K."/>
            <person name="Murakami K."/>
            <person name="Yasuda T."/>
            <person name="Iwayanagi T."/>
            <person name="Wagatsuma M."/>
            <person name="Shiratori A."/>
            <person name="Sudo H."/>
            <person name="Hosoiri T."/>
            <person name="Kaku Y."/>
            <person name="Kodaira H."/>
            <person name="Kondo H."/>
            <person name="Sugawara M."/>
            <person name="Takahashi M."/>
            <person name="Kanda K."/>
            <person name="Yokoi T."/>
            <person name="Furuya T."/>
            <person name="Kikkawa E."/>
            <person name="Omura Y."/>
            <person name="Abe K."/>
            <person name="Kamihara K."/>
            <person name="Katsuta N."/>
            <person name="Sato K."/>
            <person name="Tanikawa M."/>
            <person name="Yamazaki M."/>
            <person name="Ninomiya K."/>
            <person name="Ishibashi T."/>
            <person name="Yamashita H."/>
            <person name="Murakawa K."/>
            <person name="Fujimori K."/>
            <person name="Tanai H."/>
            <person name="Kimata M."/>
            <person name="Watanabe M."/>
            <person name="Hiraoka S."/>
            <person name="Chiba Y."/>
            <person name="Ishida S."/>
            <person name="Ono Y."/>
            <person name="Takiguchi S."/>
            <person name="Watanabe S."/>
            <person name="Yosida M."/>
            <person name="Hotuta T."/>
            <person name="Kusano J."/>
            <person name="Kanehori K."/>
            <person name="Takahashi-Fujii A."/>
            <person name="Hara H."/>
            <person name="Tanase T.-O."/>
            <person name="Nomura Y."/>
            <person name="Togiya S."/>
            <person name="Komai F."/>
            <person name="Hara R."/>
            <person name="Takeuchi K."/>
            <person name="Arita M."/>
            <person name="Imose N."/>
            <person name="Musashino K."/>
            <person name="Yuuki H."/>
            <person name="Oshima A."/>
            <person name="Sasaki N."/>
            <person name="Aotsuka S."/>
            <person name="Yoshikawa Y."/>
            <person name="Matsunawa H."/>
            <person name="Ichihara T."/>
            <person name="Shiohata N."/>
            <person name="Sano S."/>
            <person name="Moriya S."/>
            <person name="Momiyama H."/>
            <person name="Satoh N."/>
            <person name="Takami S."/>
            <person name="Terashima Y."/>
            <person name="Suzuki O."/>
            <person name="Nakagawa S."/>
            <person name="Senoh A."/>
            <person name="Mizoguchi H."/>
            <person name="Goto Y."/>
            <person name="Shimizu F."/>
            <person name="Wakebe H."/>
            <person name="Hishigaki H."/>
            <person name="Watanabe T."/>
            <person name="Sugiyama A."/>
            <person name="Takemoto M."/>
            <person name="Kawakami B."/>
            <person name="Yamazaki M."/>
            <person name="Watanabe K."/>
            <person name="Kumagai A."/>
            <person name="Itakura S."/>
            <person name="Fukuzumi Y."/>
            <person name="Fujimori Y."/>
            <person name="Komiyama M."/>
            <person name="Tashiro H."/>
            <person name="Tanigami A."/>
            <person name="Fujiwara T."/>
            <person name="Ono T."/>
            <person name="Yamada K."/>
            <person name="Fujii Y."/>
            <person name="Ozaki K."/>
            <person name="Hirao M."/>
            <person name="Ohmori Y."/>
            <person name="Kawabata A."/>
            <person name="Hikiji T."/>
            <person name="Kobatake N."/>
            <person name="Inagaki H."/>
            <person name="Ikema Y."/>
            <person name="Okamoto S."/>
            <person name="Okitani R."/>
            <person name="Kawakami T."/>
            <person name="Noguchi S."/>
            <person name="Itoh T."/>
            <person name="Shigeta K."/>
            <person name="Senba T."/>
            <person name="Matsumura K."/>
            <person name="Nakajima Y."/>
            <person name="Mizuno T."/>
            <person name="Morinaga M."/>
            <person name="Sasaki M."/>
            <person name="Togashi T."/>
            <person name="Oyama M."/>
            <person name="Hata H."/>
            <person name="Watanabe M."/>
            <person name="Komatsu T."/>
            <person name="Mizushima-Sugano J."/>
            <person name="Satoh T."/>
            <person name="Shirai Y."/>
            <person name="Takahashi Y."/>
            <person name="Nakagawa K."/>
            <person name="Okumura K."/>
            <person name="Nagase T."/>
            <person name="Nomura N."/>
            <person name="Kikuchi H."/>
            <person name="Masuho Y."/>
            <person name="Yamashita R."/>
            <person name="Nakai K."/>
            <person name="Yada T."/>
            <person name="Nakamura Y."/>
            <person name="Ohara O."/>
            <person name="Isogai T."/>
            <person name="Sugano S."/>
        </authorList>
    </citation>
    <scope>NUCLEOTIDE SEQUENCE [LARGE SCALE MRNA]</scope>
    <scope>VARIANT SER-330</scope>
    <source>
        <tissue>Brain</tissue>
    </source>
</reference>
<reference key="3">
    <citation type="journal article" date="2003" name="Genome Res.">
        <title>The secreted protein discovery initiative (SPDI), a large-scale effort to identify novel human secreted and transmembrane proteins: a bioinformatics assessment.</title>
        <authorList>
            <person name="Clark H.F."/>
            <person name="Gurney A.L."/>
            <person name="Abaya E."/>
            <person name="Baker K."/>
            <person name="Baldwin D.T."/>
            <person name="Brush J."/>
            <person name="Chen J."/>
            <person name="Chow B."/>
            <person name="Chui C."/>
            <person name="Crowley C."/>
            <person name="Currell B."/>
            <person name="Deuel B."/>
            <person name="Dowd P."/>
            <person name="Eaton D."/>
            <person name="Foster J.S."/>
            <person name="Grimaldi C."/>
            <person name="Gu Q."/>
            <person name="Hass P.E."/>
            <person name="Heldens S."/>
            <person name="Huang A."/>
            <person name="Kim H.S."/>
            <person name="Klimowski L."/>
            <person name="Jin Y."/>
            <person name="Johnson S."/>
            <person name="Lee J."/>
            <person name="Lewis L."/>
            <person name="Liao D."/>
            <person name="Mark M.R."/>
            <person name="Robbie E."/>
            <person name="Sanchez C."/>
            <person name="Schoenfeld J."/>
            <person name="Seshagiri S."/>
            <person name="Simmons L."/>
            <person name="Singh J."/>
            <person name="Smith V."/>
            <person name="Stinson J."/>
            <person name="Vagts A."/>
            <person name="Vandlen R.L."/>
            <person name="Watanabe C."/>
            <person name="Wieand D."/>
            <person name="Woods K."/>
            <person name="Xie M.-H."/>
            <person name="Yansura D.G."/>
            <person name="Yi S."/>
            <person name="Yu G."/>
            <person name="Yuan J."/>
            <person name="Zhang M."/>
            <person name="Zhang Z."/>
            <person name="Goddard A.D."/>
            <person name="Wood W.I."/>
            <person name="Godowski P.J."/>
            <person name="Gray A.M."/>
        </authorList>
    </citation>
    <scope>NUCLEOTIDE SEQUENCE [LARGE SCALE MRNA]</scope>
    <scope>VARIANT SER-330</scope>
</reference>
<reference key="4">
    <citation type="submission" date="2005-09" db="EMBL/GenBank/DDBJ databases">
        <authorList>
            <person name="Mural R.J."/>
            <person name="Istrail S."/>
            <person name="Sutton G.G."/>
            <person name="Florea L."/>
            <person name="Halpern A.L."/>
            <person name="Mobarry C.M."/>
            <person name="Lippert R."/>
            <person name="Walenz B."/>
            <person name="Shatkay H."/>
            <person name="Dew I."/>
            <person name="Miller J.R."/>
            <person name="Flanigan M.J."/>
            <person name="Edwards N.J."/>
            <person name="Bolanos R."/>
            <person name="Fasulo D."/>
            <person name="Halldorsson B.V."/>
            <person name="Hannenhalli S."/>
            <person name="Turner R."/>
            <person name="Yooseph S."/>
            <person name="Lu F."/>
            <person name="Nusskern D.R."/>
            <person name="Shue B.C."/>
            <person name="Zheng X.H."/>
            <person name="Zhong F."/>
            <person name="Delcher A.L."/>
            <person name="Huson D.H."/>
            <person name="Kravitz S.A."/>
            <person name="Mouchard L."/>
            <person name="Reinert K."/>
            <person name="Remington K.A."/>
            <person name="Clark A.G."/>
            <person name="Waterman M.S."/>
            <person name="Eichler E.E."/>
            <person name="Adams M.D."/>
            <person name="Hunkapiller M.W."/>
            <person name="Myers E.W."/>
            <person name="Venter J.C."/>
        </authorList>
    </citation>
    <scope>NUCLEOTIDE SEQUENCE [LARGE SCALE GENOMIC DNA]</scope>
</reference>
<reference key="5">
    <citation type="journal article" date="2004" name="Genome Res.">
        <title>The status, quality, and expansion of the NIH full-length cDNA project: the Mammalian Gene Collection (MGC).</title>
        <authorList>
            <consortium name="The MGC Project Team"/>
        </authorList>
    </citation>
    <scope>NUCLEOTIDE SEQUENCE [LARGE SCALE MRNA]</scope>
    <scope>VARIANT SER-330</scope>
    <source>
        <tissue>Brain</tissue>
    </source>
</reference>
<reference key="6">
    <citation type="journal article" date="2007" name="Mol. Psychiatry">
        <title>LRRTM1 on chromosome 2p12 is a maternally suppressed gene that is associated paternally with handedness and schizophrenia.</title>
        <authorList>
            <person name="Francks C."/>
            <person name="Maegawa S."/>
            <person name="Lauren J."/>
            <person name="Abrahams B.S."/>
            <person name="Velayos-Baeza A."/>
            <person name="Medland S.E."/>
            <person name="Colella S."/>
            <person name="Groszer M."/>
            <person name="McAuley E.Z."/>
            <person name="Caffrey T.M."/>
            <person name="Timmusk T."/>
            <person name="Pruunsild P."/>
            <person name="Koppel I."/>
            <person name="Lind P.A."/>
            <person name="Matsumoto-Itaba N."/>
            <person name="Nicod J."/>
            <person name="Xiong L."/>
            <person name="Joober R."/>
            <person name="Enard W."/>
            <person name="Krinsky B."/>
            <person name="Nanba E."/>
            <person name="Richardson A.J."/>
            <person name="Riley B.P."/>
            <person name="Martin N.G."/>
            <person name="Strittmatter S.M."/>
            <person name="Moeller H.J."/>
            <person name="Rujescu D."/>
            <person name="St Clair D."/>
            <person name="Muglia P."/>
            <person name="Roos J.L."/>
            <person name="Fisher S.E."/>
            <person name="Wade-Martins R."/>
            <person name="Rouleau G.A."/>
            <person name="Stein J.F."/>
            <person name="Karayiorgou M."/>
            <person name="Geschwind D.H."/>
            <person name="Ragoussis J."/>
            <person name="Kendler K.S."/>
            <person name="Airaksinen M.S."/>
            <person name="Oshimura M."/>
            <person name="DeLisi L.E."/>
            <person name="Monaco A.P."/>
        </authorList>
    </citation>
    <scope>TISSUE SPECIFICITY</scope>
    <scope>IMPRINTING</scope>
</reference>
<protein>
    <recommendedName>
        <fullName>Leucine-rich repeat transmembrane neuronal protein 1</fullName>
    </recommendedName>
</protein>
<organism>
    <name type="scientific">Homo sapiens</name>
    <name type="common">Human</name>
    <dbReference type="NCBI Taxonomy" id="9606"/>
    <lineage>
        <taxon>Eukaryota</taxon>
        <taxon>Metazoa</taxon>
        <taxon>Chordata</taxon>
        <taxon>Craniata</taxon>
        <taxon>Vertebrata</taxon>
        <taxon>Euteleostomi</taxon>
        <taxon>Mammalia</taxon>
        <taxon>Eutheria</taxon>
        <taxon>Euarchontoglires</taxon>
        <taxon>Primates</taxon>
        <taxon>Haplorrhini</taxon>
        <taxon>Catarrhini</taxon>
        <taxon>Hominidae</taxon>
        <taxon>Homo</taxon>
    </lineage>
</organism>
<evidence type="ECO:0000250" key="1"/>
<evidence type="ECO:0000255" key="2"/>
<evidence type="ECO:0000256" key="3">
    <source>
        <dbReference type="SAM" id="MobiDB-lite"/>
    </source>
</evidence>
<evidence type="ECO:0000269" key="4">
    <source>
    </source>
</evidence>
<evidence type="ECO:0000269" key="5">
    <source>
    </source>
</evidence>
<evidence type="ECO:0000269" key="6">
    <source>
    </source>
</evidence>
<evidence type="ECO:0000269" key="7">
    <source>
    </source>
</evidence>
<evidence type="ECO:0000269" key="8">
    <source>
    </source>
</evidence>
<evidence type="ECO:0000305" key="9"/>
<name>LRRT1_HUMAN</name>
<sequence length="522" mass="58641">MDFLLLGLCLYWLLRRPSGVVLCLLGACFQMLPAAPSGCPQLCRCEGRLLYCEALNLTEAPHNLSGLLGLSLRYNSLSELRAGQFTGLMQLTWLYLDHNHICSVQGDAFQKLRRVKELTLSSNQITQLPNTTFRPMPNLRSVDLSYNKLQALAPDLFHGLRKLTTLHMRANAIQFVPVRIFQDCRSLKFLDIGYNQLKSLARNSFAGLFKLTELHLEHNDLVKVNFAHFPRLISLHSLCLRRNKVAIVVSSLDWVWNLEKMDLSGNEIEYMEPHVFETVPHLQSLQLDSNRLTYIEPRILNSWKSLTSITLAGNLWDCGRNVCALASWLNNFQGRYDGNLQCASPEYAQGEDVLDAVYAFHLCEDGAEPTSGHLLSAVTNRSDLGPPASSATTLADGGEGQHDGTFEPATVALPGGEHAENAVQIHKVVTGTMALIFSFLIVVLVLYVSWKCFPASLRQLRQCFVTQRRKQKQKQTMHQMAAMSAQEYYVDYKPNHIEGALVIINEYGSCTCHQQPARECEV</sequence>
<keyword id="KW-1003">Cell membrane</keyword>
<keyword id="KW-0325">Glycoprotein</keyword>
<keyword id="KW-0433">Leucine-rich repeat</keyword>
<keyword id="KW-0472">Membrane</keyword>
<keyword id="KW-0628">Postsynaptic cell membrane</keyword>
<keyword id="KW-1267">Proteomics identification</keyword>
<keyword id="KW-1185">Reference proteome</keyword>
<keyword id="KW-0677">Repeat</keyword>
<keyword id="KW-0732">Signal</keyword>
<keyword id="KW-0770">Synapse</keyword>
<keyword id="KW-0812">Transmembrane</keyword>
<keyword id="KW-1133">Transmembrane helix</keyword>
<feature type="signal peptide" evidence="2">
    <location>
        <begin position="1"/>
        <end position="34"/>
    </location>
</feature>
<feature type="chain" id="PRO_0000018350" description="Leucine-rich repeat transmembrane neuronal protein 1">
    <location>
        <begin position="35"/>
        <end position="522"/>
    </location>
</feature>
<feature type="topological domain" description="Extracellular" evidence="2">
    <location>
        <begin position="35"/>
        <end position="427"/>
    </location>
</feature>
<feature type="transmembrane region" description="Helical" evidence="2">
    <location>
        <begin position="428"/>
        <end position="448"/>
    </location>
</feature>
<feature type="topological domain" description="Cytoplasmic" evidence="2">
    <location>
        <begin position="449"/>
        <end position="522"/>
    </location>
</feature>
<feature type="domain" description="LRRNT">
    <location>
        <begin position="35"/>
        <end position="63"/>
    </location>
</feature>
<feature type="repeat" description="LRR 1">
    <location>
        <begin position="64"/>
        <end position="87"/>
    </location>
</feature>
<feature type="repeat" description="LRR 2">
    <location>
        <begin position="89"/>
        <end position="111"/>
    </location>
</feature>
<feature type="repeat" description="LRR 3">
    <location>
        <begin position="112"/>
        <end position="135"/>
    </location>
</feature>
<feature type="repeat" description="LRR 4">
    <location>
        <begin position="137"/>
        <end position="159"/>
    </location>
</feature>
<feature type="repeat" description="LRR 5">
    <location>
        <begin position="161"/>
        <end position="183"/>
    </location>
</feature>
<feature type="repeat" description="LRR 6">
    <location>
        <begin position="184"/>
        <end position="207"/>
    </location>
</feature>
<feature type="repeat" description="LRR 7">
    <location>
        <begin position="209"/>
        <end position="231"/>
    </location>
</feature>
<feature type="repeat" description="LRR 8">
    <location>
        <begin position="233"/>
        <end position="255"/>
    </location>
</feature>
<feature type="repeat" description="LRR 9">
    <location>
        <begin position="256"/>
        <end position="278"/>
    </location>
</feature>
<feature type="repeat" description="LRR 10">
    <location>
        <begin position="279"/>
        <end position="302"/>
    </location>
</feature>
<feature type="domain" description="LRRCT">
    <location>
        <begin position="314"/>
        <end position="365"/>
    </location>
</feature>
<feature type="region of interest" description="Disordered" evidence="3">
    <location>
        <begin position="382"/>
        <end position="401"/>
    </location>
</feature>
<feature type="glycosylation site" description="N-linked (GlcNAc...) asparagine" evidence="2">
    <location>
        <position position="56"/>
    </location>
</feature>
<feature type="glycosylation site" description="N-linked (GlcNAc...) asparagine" evidence="2">
    <location>
        <position position="63"/>
    </location>
</feature>
<feature type="glycosylation site" description="N-linked (GlcNAc...) asparagine" evidence="2">
    <location>
        <position position="130"/>
    </location>
</feature>
<feature type="glycosylation site" description="N-linked (GlcNAc...) asparagine" evidence="2">
    <location>
        <position position="380"/>
    </location>
</feature>
<feature type="sequence variant" id="VAR_022681" description="In dbSNP:rs6733871." evidence="5 6 7">
    <original>N</original>
    <variation>S</variation>
    <location>
        <position position="330"/>
    </location>
</feature>
<feature type="sequence conflict" description="In Ref. 1; AAO67545 and 2; BAB71240." evidence="9" ref="1 2">
    <original>I</original>
    <variation>T</variation>
    <location>
        <position position="503"/>
    </location>
</feature>
<comment type="function">
    <text evidence="1">Exhibits strong synaptogenic activity, restricted to excitatory presynaptic differentiation, acting at both pre- and postsynaptic level.</text>
</comment>
<comment type="subcellular location">
    <subcellularLocation>
        <location evidence="1">Cell membrane</location>
        <topology evidence="1">Single-pass type I membrane protein</topology>
    </subcellularLocation>
    <subcellularLocation>
        <location evidence="1">Postsynaptic cell membrane</location>
        <topology evidence="1">Single-pass type I membrane protein</topology>
    </subcellularLocation>
</comment>
<comment type="tissue specificity">
    <text evidence="4 8">Predominantly expressed in forebrain regions including thalamus and cerebral cortex.</text>
</comment>
<comment type="miscellaneous">
    <text>This gene is imprinted, being predominantly expressed from the paternal allele and showing a variable pattern of maternal down-regulation. May be associated paternally with handedness and schizophrenia.</text>
</comment>
<comment type="similarity">
    <text evidence="9">Belongs to the LRRTM family.</text>
</comment>
<comment type="online information" name="Protein Spotlight">
    <link uri="https://www.proteinspotlight.org/back_issues/091"/>
    <text>The hands to say it - Issue 91 of February 2008</text>
</comment>
<proteinExistence type="evidence at protein level"/>
<gene>
    <name type="primary">LRRTM1</name>
    <name type="ORF">UNQ675/PRO1309</name>
</gene>
<accession>Q86UE6</accession>
<accession>A8K397</accession>
<accession>D6W5K1</accession>
<accession>Q96DN1</accession>